<sequence>MTAILERRESTSLWGRFCNWITSTENRLYIGWFGVLMIPTLLTATSVFIIAFIAAPPVDIDGIREPVSGSLLYGNNIISGAIIPTSAAIGLHFYPIWEAASVDEWLYNGGPYELIVLHFLLGVACYMGREWELSFRLGMRPWIAVAYSAPVAAATAVFLIYPIGQGSFSDGMPLGISGTFNFMIVFQAEHNILMHPFHMLGVAGVFGGSLFSAMHGSLVTSSLIRETTENESANEGYKFGQEEETYNIVAAHGYFGRLIFQYASFNNSRSLHFFLAAWPVVGIWFTALGISTMAFNLNGFNFNQSVVDSQGRVINTWADIINRANLGMEVMHERNAHNFPLDLAALEVPSING</sequence>
<protein>
    <recommendedName>
        <fullName evidence="1">Photosystem II protein D1</fullName>
        <shortName evidence="1">PSII D1 protein</shortName>
        <ecNumber evidence="1">1.10.3.9</ecNumber>
    </recommendedName>
    <alternativeName>
        <fullName evidence="1">Photosystem II Q(B) protein</fullName>
    </alternativeName>
</protein>
<comment type="function">
    <text evidence="1">Photosystem II (PSII) is a light-driven water:plastoquinone oxidoreductase that uses light energy to abstract electrons from H(2)O, generating O(2) and a proton gradient subsequently used for ATP formation. It consists of a core antenna complex that captures photons, and an electron transfer chain that converts photonic excitation into a charge separation. The D1/D2 (PsbA/PsbD) reaction center heterodimer binds P680, the primary electron donor of PSII as well as several subsequent electron acceptors.</text>
</comment>
<comment type="catalytic activity">
    <reaction evidence="1">
        <text>2 a plastoquinone + 4 hnu + 2 H2O = 2 a plastoquinol + O2</text>
        <dbReference type="Rhea" id="RHEA:36359"/>
        <dbReference type="Rhea" id="RHEA-COMP:9561"/>
        <dbReference type="Rhea" id="RHEA-COMP:9562"/>
        <dbReference type="ChEBI" id="CHEBI:15377"/>
        <dbReference type="ChEBI" id="CHEBI:15379"/>
        <dbReference type="ChEBI" id="CHEBI:17757"/>
        <dbReference type="ChEBI" id="CHEBI:30212"/>
        <dbReference type="ChEBI" id="CHEBI:62192"/>
        <dbReference type="EC" id="1.10.3.9"/>
    </reaction>
</comment>
<comment type="cofactor">
    <text evidence="1">The D1/D2 heterodimer binds P680, chlorophylls that are the primary electron donor of PSII, and subsequent electron acceptors. It shares a non-heme iron and each subunit binds pheophytin, quinone, additional chlorophylls, carotenoids and lipids. D1 provides most of the ligands for the Mn4-Ca-O5 cluster of the oxygen-evolving complex (OEC). There is also a Cl(-1) ion associated with D1 and D2, which is required for oxygen evolution. The PSII complex binds additional chlorophylls, carotenoids and specific lipids.</text>
</comment>
<comment type="subunit">
    <text evidence="1">PSII is composed of 1 copy each of membrane proteins PsbA, PsbB, PsbC, PsbD, PsbE, PsbF, PsbH, PsbI, PsbJ, PsbK, PsbL, PsbM, PsbT, PsbX, PsbY, PsbZ, Psb30/Ycf12, at least 3 peripheral proteins of the oxygen-evolving complex and a large number of cofactors. It forms dimeric complexes.</text>
</comment>
<comment type="subcellular location">
    <subcellularLocation>
        <location evidence="1">Plastid</location>
        <location evidence="1">Chloroplast thylakoid membrane</location>
        <topology evidence="1">Multi-pass membrane protein</topology>
    </subcellularLocation>
</comment>
<comment type="PTM">
    <text evidence="1">Tyr-161 forms a radical intermediate that is referred to as redox-active TyrZ, YZ or Y-Z.</text>
</comment>
<comment type="PTM">
    <text evidence="1">C-terminally processed by CTPA; processing is essential to allow assembly of the oxygen-evolving complex and thus photosynthetic growth.</text>
</comment>
<comment type="miscellaneous">
    <text evidence="1">2 of the reaction center chlorophylls (ChlD1 and ChlD2) are entirely coordinated by water.</text>
</comment>
<comment type="miscellaneous">
    <text evidence="1">Herbicides such as atrazine, BNT, diuron or ioxynil bind in the Q(B) binding site and block subsequent electron transfer.</text>
</comment>
<comment type="similarity">
    <text evidence="1">Belongs to the reaction center PufL/M/PsbA/D family.</text>
</comment>
<evidence type="ECO:0000255" key="1">
    <source>
        <dbReference type="HAMAP-Rule" id="MF_01379"/>
    </source>
</evidence>
<name>PSBA_AGRST</name>
<proteinExistence type="inferred from homology"/>
<keyword id="KW-0007">Acetylation</keyword>
<keyword id="KW-0106">Calcium</keyword>
<keyword id="KW-0148">Chlorophyll</keyword>
<keyword id="KW-0150">Chloroplast</keyword>
<keyword id="KW-0157">Chromophore</keyword>
<keyword id="KW-0249">Electron transport</keyword>
<keyword id="KW-0359">Herbicide resistance</keyword>
<keyword id="KW-0408">Iron</keyword>
<keyword id="KW-0460">Magnesium</keyword>
<keyword id="KW-0464">Manganese</keyword>
<keyword id="KW-0472">Membrane</keyword>
<keyword id="KW-0479">Metal-binding</keyword>
<keyword id="KW-0560">Oxidoreductase</keyword>
<keyword id="KW-0597">Phosphoprotein</keyword>
<keyword id="KW-0602">Photosynthesis</keyword>
<keyword id="KW-0604">Photosystem II</keyword>
<keyword id="KW-0934">Plastid</keyword>
<keyword id="KW-0793">Thylakoid</keyword>
<keyword id="KW-0812">Transmembrane</keyword>
<keyword id="KW-1133">Transmembrane helix</keyword>
<keyword id="KW-0813">Transport</keyword>
<reference key="1">
    <citation type="journal article" date="2007" name="Theor. Appl. Genet.">
        <title>Complete chloroplast genome sequences of Hordeum vulgare, Sorghum bicolor and Agrostis stolonifera, and comparative analyses with other grass genomes.</title>
        <authorList>
            <person name="Saski C."/>
            <person name="Lee S.-B."/>
            <person name="Fjellheim S."/>
            <person name="Guda C."/>
            <person name="Jansen R.K."/>
            <person name="Luo H."/>
            <person name="Tomkins J."/>
            <person name="Rognli O.A."/>
            <person name="Daniell H."/>
            <person name="Clarke J.L."/>
        </authorList>
    </citation>
    <scope>NUCLEOTIDE SEQUENCE [LARGE SCALE GENOMIC DNA]</scope>
    <source>
        <strain>cv. Penn A-4</strain>
    </source>
</reference>
<gene>
    <name evidence="1" type="primary">psbA</name>
</gene>
<dbReference type="EC" id="1.10.3.9" evidence="1"/>
<dbReference type="EMBL" id="EF115543">
    <property type="protein sequence ID" value="ABK79560.1"/>
    <property type="molecule type" value="Genomic_DNA"/>
</dbReference>
<dbReference type="RefSeq" id="YP_874716.1">
    <property type="nucleotide sequence ID" value="NC_008591.1"/>
</dbReference>
<dbReference type="SMR" id="A1E9Y8"/>
<dbReference type="GeneID" id="4524968"/>
<dbReference type="GO" id="GO:0009535">
    <property type="term" value="C:chloroplast thylakoid membrane"/>
    <property type="evidence" value="ECO:0007669"/>
    <property type="project" value="UniProtKB-SubCell"/>
</dbReference>
<dbReference type="GO" id="GO:0009523">
    <property type="term" value="C:photosystem II"/>
    <property type="evidence" value="ECO:0007669"/>
    <property type="project" value="UniProtKB-KW"/>
</dbReference>
<dbReference type="GO" id="GO:0016168">
    <property type="term" value="F:chlorophyll binding"/>
    <property type="evidence" value="ECO:0007669"/>
    <property type="project" value="UniProtKB-UniRule"/>
</dbReference>
<dbReference type="GO" id="GO:0045156">
    <property type="term" value="F:electron transporter, transferring electrons within the cyclic electron transport pathway of photosynthesis activity"/>
    <property type="evidence" value="ECO:0007669"/>
    <property type="project" value="InterPro"/>
</dbReference>
<dbReference type="GO" id="GO:0005506">
    <property type="term" value="F:iron ion binding"/>
    <property type="evidence" value="ECO:0007669"/>
    <property type="project" value="UniProtKB-UniRule"/>
</dbReference>
<dbReference type="GO" id="GO:0016682">
    <property type="term" value="F:oxidoreductase activity, acting on diphenols and related substances as donors, oxygen as acceptor"/>
    <property type="evidence" value="ECO:0007669"/>
    <property type="project" value="UniProtKB-UniRule"/>
</dbReference>
<dbReference type="GO" id="GO:0010242">
    <property type="term" value="F:oxygen evolving activity"/>
    <property type="evidence" value="ECO:0007669"/>
    <property type="project" value="UniProtKB-EC"/>
</dbReference>
<dbReference type="GO" id="GO:0009772">
    <property type="term" value="P:photosynthetic electron transport in photosystem II"/>
    <property type="evidence" value="ECO:0007669"/>
    <property type="project" value="InterPro"/>
</dbReference>
<dbReference type="GO" id="GO:0009635">
    <property type="term" value="P:response to herbicide"/>
    <property type="evidence" value="ECO:0007669"/>
    <property type="project" value="UniProtKB-KW"/>
</dbReference>
<dbReference type="CDD" id="cd09289">
    <property type="entry name" value="Photosystem-II_D1"/>
    <property type="match status" value="1"/>
</dbReference>
<dbReference type="FunFam" id="1.20.85.10:FF:000002">
    <property type="entry name" value="Photosystem II protein D1"/>
    <property type="match status" value="1"/>
</dbReference>
<dbReference type="Gene3D" id="1.20.85.10">
    <property type="entry name" value="Photosystem II protein D1-like"/>
    <property type="match status" value="1"/>
</dbReference>
<dbReference type="HAMAP" id="MF_01379">
    <property type="entry name" value="PSII_PsbA_D1"/>
    <property type="match status" value="1"/>
</dbReference>
<dbReference type="InterPro" id="IPR055266">
    <property type="entry name" value="D1/D2"/>
</dbReference>
<dbReference type="InterPro" id="IPR036854">
    <property type="entry name" value="Photo_II_D1/D2_sf"/>
</dbReference>
<dbReference type="InterPro" id="IPR000484">
    <property type="entry name" value="Photo_RC_L/M"/>
</dbReference>
<dbReference type="InterPro" id="IPR055265">
    <property type="entry name" value="Photo_RC_L/M_CS"/>
</dbReference>
<dbReference type="InterPro" id="IPR005867">
    <property type="entry name" value="PSII_D1"/>
</dbReference>
<dbReference type="NCBIfam" id="TIGR01151">
    <property type="entry name" value="psbA"/>
    <property type="match status" value="1"/>
</dbReference>
<dbReference type="PANTHER" id="PTHR33149">
    <property type="entry name" value="PHOTOSYSTEM II PROTEIN D1"/>
    <property type="match status" value="1"/>
</dbReference>
<dbReference type="PANTHER" id="PTHR33149:SF58">
    <property type="entry name" value="PHOTOSYSTEM II PROTEIN D1"/>
    <property type="match status" value="1"/>
</dbReference>
<dbReference type="Pfam" id="PF00124">
    <property type="entry name" value="Photo_RC"/>
    <property type="match status" value="1"/>
</dbReference>
<dbReference type="PRINTS" id="PR00256">
    <property type="entry name" value="REACTNCENTRE"/>
</dbReference>
<dbReference type="SUPFAM" id="SSF81483">
    <property type="entry name" value="Bacterial photosystem II reaction centre, L and M subunits"/>
    <property type="match status" value="1"/>
</dbReference>
<dbReference type="PROSITE" id="PS00244">
    <property type="entry name" value="REACTION_CENTER"/>
    <property type="match status" value="1"/>
</dbReference>
<accession>A1E9Y8</accession>
<feature type="initiator methionine" description="Removed" evidence="1">
    <location>
        <position position="1"/>
    </location>
</feature>
<feature type="chain" id="PRO_0000339942" description="Photosystem II protein D1" evidence="1">
    <location>
        <begin position="2"/>
        <end position="344"/>
    </location>
</feature>
<feature type="propeptide" id="PRO_0000339943" evidence="1">
    <location>
        <begin position="345"/>
        <end position="353"/>
    </location>
</feature>
<feature type="transmembrane region" description="Helical" evidence="1">
    <location>
        <begin position="29"/>
        <end position="46"/>
    </location>
</feature>
<feature type="transmembrane region" description="Helical" evidence="1">
    <location>
        <begin position="118"/>
        <end position="133"/>
    </location>
</feature>
<feature type="transmembrane region" description="Helical" evidence="1">
    <location>
        <begin position="142"/>
        <end position="156"/>
    </location>
</feature>
<feature type="transmembrane region" description="Helical" evidence="1">
    <location>
        <begin position="197"/>
        <end position="218"/>
    </location>
</feature>
<feature type="transmembrane region" description="Helical" evidence="1">
    <location>
        <begin position="274"/>
        <end position="288"/>
    </location>
</feature>
<feature type="binding site" description="axial binding residue" evidence="1">
    <location>
        <position position="118"/>
    </location>
    <ligand>
        <name>chlorophyll a</name>
        <dbReference type="ChEBI" id="CHEBI:58416"/>
        <label>ChlzD1</label>
    </ligand>
    <ligandPart>
        <name>Mg</name>
        <dbReference type="ChEBI" id="CHEBI:25107"/>
    </ligandPart>
</feature>
<feature type="binding site" evidence="1">
    <location>
        <position position="126"/>
    </location>
    <ligand>
        <name>pheophytin a</name>
        <dbReference type="ChEBI" id="CHEBI:136840"/>
        <label>D1</label>
    </ligand>
</feature>
<feature type="binding site" evidence="1">
    <location>
        <position position="170"/>
    </location>
    <ligand>
        <name>[CaMn4O5] cluster</name>
        <dbReference type="ChEBI" id="CHEBI:189552"/>
    </ligand>
</feature>
<feature type="binding site" evidence="1">
    <location>
        <position position="189"/>
    </location>
    <ligand>
        <name>[CaMn4O5] cluster</name>
        <dbReference type="ChEBI" id="CHEBI:189552"/>
    </ligand>
</feature>
<feature type="binding site" description="axial binding residue" evidence="1">
    <location>
        <position position="198"/>
    </location>
    <ligand>
        <name>chlorophyll a</name>
        <dbReference type="ChEBI" id="CHEBI:58416"/>
        <label>PD1</label>
    </ligand>
    <ligandPart>
        <name>Mg</name>
        <dbReference type="ChEBI" id="CHEBI:25107"/>
    </ligandPart>
</feature>
<feature type="binding site" evidence="1">
    <location>
        <position position="215"/>
    </location>
    <ligand>
        <name>a quinone</name>
        <dbReference type="ChEBI" id="CHEBI:132124"/>
        <label>B</label>
    </ligand>
</feature>
<feature type="binding site" evidence="1">
    <location>
        <position position="215"/>
    </location>
    <ligand>
        <name>Fe cation</name>
        <dbReference type="ChEBI" id="CHEBI:24875"/>
        <note>ligand shared with heterodimeric partner</note>
    </ligand>
</feature>
<feature type="binding site" evidence="1">
    <location>
        <begin position="264"/>
        <end position="265"/>
    </location>
    <ligand>
        <name>a quinone</name>
        <dbReference type="ChEBI" id="CHEBI:132124"/>
        <label>B</label>
    </ligand>
</feature>
<feature type="binding site" evidence="1">
    <location>
        <position position="272"/>
    </location>
    <ligand>
        <name>Fe cation</name>
        <dbReference type="ChEBI" id="CHEBI:24875"/>
        <note>ligand shared with heterodimeric partner</note>
    </ligand>
</feature>
<feature type="binding site" evidence="1">
    <location>
        <position position="332"/>
    </location>
    <ligand>
        <name>[CaMn4O5] cluster</name>
        <dbReference type="ChEBI" id="CHEBI:189552"/>
    </ligand>
</feature>
<feature type="binding site" evidence="1">
    <location>
        <position position="333"/>
    </location>
    <ligand>
        <name>[CaMn4O5] cluster</name>
        <dbReference type="ChEBI" id="CHEBI:189552"/>
    </ligand>
</feature>
<feature type="binding site" evidence="1">
    <location>
        <position position="342"/>
    </location>
    <ligand>
        <name>[CaMn4O5] cluster</name>
        <dbReference type="ChEBI" id="CHEBI:189552"/>
    </ligand>
</feature>
<feature type="binding site" evidence="1">
    <location>
        <position position="344"/>
    </location>
    <ligand>
        <name>[CaMn4O5] cluster</name>
        <dbReference type="ChEBI" id="CHEBI:189552"/>
    </ligand>
</feature>
<feature type="site" description="Tyrosine radical intermediate" evidence="1">
    <location>
        <position position="161"/>
    </location>
</feature>
<feature type="site" description="Stabilizes free radical intermediate" evidence="1">
    <location>
        <position position="190"/>
    </location>
</feature>
<feature type="site" description="Cleavage; by CTPA" evidence="1">
    <location>
        <begin position="344"/>
        <end position="345"/>
    </location>
</feature>
<feature type="modified residue" description="N-acetylthreonine" evidence="1">
    <location>
        <position position="2"/>
    </location>
</feature>
<feature type="modified residue" description="Phosphothreonine" evidence="1">
    <location>
        <position position="2"/>
    </location>
</feature>
<geneLocation type="chloroplast"/>
<organism>
    <name type="scientific">Agrostis stolonifera</name>
    <name type="common">Creeping bentgrass</name>
    <dbReference type="NCBI Taxonomy" id="63632"/>
    <lineage>
        <taxon>Eukaryota</taxon>
        <taxon>Viridiplantae</taxon>
        <taxon>Streptophyta</taxon>
        <taxon>Embryophyta</taxon>
        <taxon>Tracheophyta</taxon>
        <taxon>Spermatophyta</taxon>
        <taxon>Magnoliopsida</taxon>
        <taxon>Liliopsida</taxon>
        <taxon>Poales</taxon>
        <taxon>Poaceae</taxon>
        <taxon>BOP clade</taxon>
        <taxon>Pooideae</taxon>
        <taxon>Poodae</taxon>
        <taxon>Poeae</taxon>
        <taxon>Poeae Chloroplast Group 1 (Aveneae type)</taxon>
        <taxon>Agrostidodinae</taxon>
        <taxon>Agrostidinae</taxon>
        <taxon>Agrostis</taxon>
    </lineage>
</organism>